<reference key="1">
    <citation type="journal article" date="2008" name="BMC Genomics">
        <title>Genome sequence and rapid evolution of the rice pathogen Xanthomonas oryzae pv. oryzae PXO99A.</title>
        <authorList>
            <person name="Salzberg S.L."/>
            <person name="Sommer D.D."/>
            <person name="Schatz M.C."/>
            <person name="Phillippy A.M."/>
            <person name="Rabinowicz P.D."/>
            <person name="Tsuge S."/>
            <person name="Furutani A."/>
            <person name="Ochiai H."/>
            <person name="Delcher A.L."/>
            <person name="Kelley D."/>
            <person name="Madupu R."/>
            <person name="Puiu D."/>
            <person name="Radune D."/>
            <person name="Shumway M."/>
            <person name="Trapnell C."/>
            <person name="Aparna G."/>
            <person name="Jha G."/>
            <person name="Pandey A."/>
            <person name="Patil P.B."/>
            <person name="Ishihara H."/>
            <person name="Meyer D.F."/>
            <person name="Szurek B."/>
            <person name="Verdier V."/>
            <person name="Koebnik R."/>
            <person name="Dow J.M."/>
            <person name="Ryan R.P."/>
            <person name="Hirata H."/>
            <person name="Tsuyumu S."/>
            <person name="Won Lee S."/>
            <person name="Seo Y.-S."/>
            <person name="Sriariyanum M."/>
            <person name="Ronald P.C."/>
            <person name="Sonti R.V."/>
            <person name="Van Sluys M.-A."/>
            <person name="Leach J.E."/>
            <person name="White F.F."/>
            <person name="Bogdanove A.J."/>
        </authorList>
    </citation>
    <scope>NUCLEOTIDE SEQUENCE [LARGE SCALE GENOMIC DNA]</scope>
    <source>
        <strain>PXO99A</strain>
    </source>
</reference>
<gene>
    <name evidence="1" type="primary">recO</name>
    <name type="ordered locus">PXO_01719</name>
</gene>
<dbReference type="EMBL" id="CP000967">
    <property type="protein sequence ID" value="ACD59677.1"/>
    <property type="molecule type" value="Genomic_DNA"/>
</dbReference>
<dbReference type="RefSeq" id="WP_011258604.1">
    <property type="nucleotide sequence ID" value="NC_010717.2"/>
</dbReference>
<dbReference type="SMR" id="B2SRX5"/>
<dbReference type="KEGG" id="xop:PXO_01719"/>
<dbReference type="eggNOG" id="COG1381">
    <property type="taxonomic scope" value="Bacteria"/>
</dbReference>
<dbReference type="HOGENOM" id="CLU_066645_1_0_6"/>
<dbReference type="Proteomes" id="UP000001740">
    <property type="component" value="Chromosome"/>
</dbReference>
<dbReference type="GO" id="GO:0043590">
    <property type="term" value="C:bacterial nucleoid"/>
    <property type="evidence" value="ECO:0007669"/>
    <property type="project" value="TreeGrafter"/>
</dbReference>
<dbReference type="GO" id="GO:0006310">
    <property type="term" value="P:DNA recombination"/>
    <property type="evidence" value="ECO:0007669"/>
    <property type="project" value="UniProtKB-UniRule"/>
</dbReference>
<dbReference type="GO" id="GO:0006302">
    <property type="term" value="P:double-strand break repair"/>
    <property type="evidence" value="ECO:0007669"/>
    <property type="project" value="TreeGrafter"/>
</dbReference>
<dbReference type="Gene3D" id="2.40.50.140">
    <property type="entry name" value="Nucleic acid-binding proteins"/>
    <property type="match status" value="1"/>
</dbReference>
<dbReference type="Gene3D" id="1.20.1440.120">
    <property type="entry name" value="Recombination protein O, C-terminal domain"/>
    <property type="match status" value="1"/>
</dbReference>
<dbReference type="HAMAP" id="MF_00201">
    <property type="entry name" value="RecO"/>
    <property type="match status" value="1"/>
</dbReference>
<dbReference type="InterPro" id="IPR037278">
    <property type="entry name" value="ARFGAP/RecO"/>
</dbReference>
<dbReference type="InterPro" id="IPR022572">
    <property type="entry name" value="DNA_rep/recomb_RecO_N"/>
</dbReference>
<dbReference type="InterPro" id="IPR012340">
    <property type="entry name" value="NA-bd_OB-fold"/>
</dbReference>
<dbReference type="InterPro" id="IPR003717">
    <property type="entry name" value="RecO"/>
</dbReference>
<dbReference type="InterPro" id="IPR042242">
    <property type="entry name" value="RecO_C"/>
</dbReference>
<dbReference type="NCBIfam" id="TIGR00613">
    <property type="entry name" value="reco"/>
    <property type="match status" value="1"/>
</dbReference>
<dbReference type="PANTHER" id="PTHR33991">
    <property type="entry name" value="DNA REPAIR PROTEIN RECO"/>
    <property type="match status" value="1"/>
</dbReference>
<dbReference type="PANTHER" id="PTHR33991:SF1">
    <property type="entry name" value="DNA REPAIR PROTEIN RECO"/>
    <property type="match status" value="1"/>
</dbReference>
<dbReference type="Pfam" id="PF02565">
    <property type="entry name" value="RecO_C"/>
    <property type="match status" value="1"/>
</dbReference>
<dbReference type="Pfam" id="PF11967">
    <property type="entry name" value="RecO_N"/>
    <property type="match status" value="1"/>
</dbReference>
<dbReference type="SUPFAM" id="SSF57863">
    <property type="entry name" value="ArfGap/RecO-like zinc finger"/>
    <property type="match status" value="1"/>
</dbReference>
<dbReference type="SUPFAM" id="SSF50249">
    <property type="entry name" value="Nucleic acid-binding proteins"/>
    <property type="match status" value="1"/>
</dbReference>
<name>RECO_XANOP</name>
<evidence type="ECO:0000255" key="1">
    <source>
        <dbReference type="HAMAP-Rule" id="MF_00201"/>
    </source>
</evidence>
<comment type="function">
    <text evidence="1">Involved in DNA repair and RecF pathway recombination.</text>
</comment>
<comment type="similarity">
    <text evidence="1">Belongs to the RecO family.</text>
</comment>
<accession>B2SRX5</accession>
<proteinExistence type="inferred from homology"/>
<organism>
    <name type="scientific">Xanthomonas oryzae pv. oryzae (strain PXO99A)</name>
    <dbReference type="NCBI Taxonomy" id="360094"/>
    <lineage>
        <taxon>Bacteria</taxon>
        <taxon>Pseudomonadati</taxon>
        <taxon>Pseudomonadota</taxon>
        <taxon>Gammaproteobacteria</taxon>
        <taxon>Lysobacterales</taxon>
        <taxon>Lysobacteraceae</taxon>
        <taxon>Xanthomonas</taxon>
    </lineage>
</organism>
<feature type="chain" id="PRO_1000099428" description="DNA repair protein RecO">
    <location>
        <begin position="1"/>
        <end position="240"/>
    </location>
</feature>
<keyword id="KW-0227">DNA damage</keyword>
<keyword id="KW-0233">DNA recombination</keyword>
<keyword id="KW-0234">DNA repair</keyword>
<protein>
    <recommendedName>
        <fullName evidence="1">DNA repair protein RecO</fullName>
    </recommendedName>
    <alternativeName>
        <fullName evidence="1">Recombination protein O</fullName>
    </alternativeName>
</protein>
<sequence>MLIEHERGFVLHVRAWRETSLLVEVLTEQHGRVGLLARGVHGPRKQALRAALQPLQLIQFSAVQRGELAQLRQAEALDTAPRLVGDTMLAGFYISELLLRLAPRNDPVPELYACYTQARTHLAADLPLAWGLRRFERDVLEGLGFAFDLQHDSDGQPIDPAARYRLDPEEGALRVLSERLAQDRRETVTGAALLALGEDVMPAAEDMPGLRRSMRSVLLHHLGGRGLKSWEMLEDLARRR</sequence>